<organism>
    <name type="scientific">Chlorobium chlorochromatii (strain CaD3)</name>
    <dbReference type="NCBI Taxonomy" id="340177"/>
    <lineage>
        <taxon>Bacteria</taxon>
        <taxon>Pseudomonadati</taxon>
        <taxon>Chlorobiota</taxon>
        <taxon>Chlorobiia</taxon>
        <taxon>Chlorobiales</taxon>
        <taxon>Chlorobiaceae</taxon>
        <taxon>Chlorobium/Pelodictyon group</taxon>
        <taxon>Chlorobium</taxon>
    </lineage>
</organism>
<comment type="function">
    <text evidence="1">Catalyzes the synthesis of GMP from XMP.</text>
</comment>
<comment type="catalytic activity">
    <reaction evidence="1">
        <text>XMP + L-glutamine + ATP + H2O = GMP + L-glutamate + AMP + diphosphate + 2 H(+)</text>
        <dbReference type="Rhea" id="RHEA:11680"/>
        <dbReference type="ChEBI" id="CHEBI:15377"/>
        <dbReference type="ChEBI" id="CHEBI:15378"/>
        <dbReference type="ChEBI" id="CHEBI:29985"/>
        <dbReference type="ChEBI" id="CHEBI:30616"/>
        <dbReference type="ChEBI" id="CHEBI:33019"/>
        <dbReference type="ChEBI" id="CHEBI:57464"/>
        <dbReference type="ChEBI" id="CHEBI:58115"/>
        <dbReference type="ChEBI" id="CHEBI:58359"/>
        <dbReference type="ChEBI" id="CHEBI:456215"/>
        <dbReference type="EC" id="6.3.5.2"/>
    </reaction>
</comment>
<comment type="pathway">
    <text evidence="1">Purine metabolism; GMP biosynthesis; GMP from XMP (L-Gln route): step 1/1.</text>
</comment>
<comment type="subunit">
    <text evidence="1">Homodimer.</text>
</comment>
<protein>
    <recommendedName>
        <fullName evidence="1">GMP synthase [glutamine-hydrolyzing]</fullName>
        <ecNumber evidence="1">6.3.5.2</ecNumber>
    </recommendedName>
    <alternativeName>
        <fullName evidence="1">GMP synthetase</fullName>
    </alternativeName>
    <alternativeName>
        <fullName evidence="1">Glutamine amidotransferase</fullName>
    </alternativeName>
</protein>
<keyword id="KW-0067">ATP-binding</keyword>
<keyword id="KW-0315">Glutamine amidotransferase</keyword>
<keyword id="KW-0332">GMP biosynthesis</keyword>
<keyword id="KW-0436">Ligase</keyword>
<keyword id="KW-0547">Nucleotide-binding</keyword>
<keyword id="KW-0658">Purine biosynthesis</keyword>
<accession>Q3AT13</accession>
<evidence type="ECO:0000255" key="1">
    <source>
        <dbReference type="HAMAP-Rule" id="MF_00344"/>
    </source>
</evidence>
<sequence length="511" mass="56733">MQSVLVLDFGSQYTQLIARRIRELNIYSEILPYNTPADTIRTHQPKAIILSGGPNSVYDQTAFMPDPAIFSLGIPVLGICYGLQAIAKHFGGVVASSNKHEFGRSKILVEQQGDNPLFQNIPNSDVWMSHGDKVMQLPEGFRATASSDNSEICAFESTGVNSPAHIYGLQFHPEVQHTLYGKEMLGNFLLNIAAITPDWSSKSFIEHQIEEIRRKAGNNTVICGISGGVDSTVAAVLVSKAIGKQLHCVFVDNGLLRKNEAEKVMHFLKPLGLHITLADSSDLFLKRLKGVASPEKKRKIIGRTFIQVFEEQIHHEKFLVQGTLYPDVIESISVKGPSETIKSHHNVGGLPKRMKLKLIEPLRELFKDEVRAVGRELGIPEDILMRHPFPGPGLAVRVLGSLTHERLEILREADEIYIEELQASGLYSKVWQAFAVLLPVQSVGVMGDKRTYENVLALRAVESSDGMTADWAPLPHDFLARVSNRIINEVRGINRVAYDISSKPPATIEWE</sequence>
<gene>
    <name evidence="1" type="primary">guaA</name>
    <name type="ordered locus">Cag_0589</name>
</gene>
<dbReference type="EC" id="6.3.5.2" evidence="1"/>
<dbReference type="EMBL" id="CP000108">
    <property type="protein sequence ID" value="ABB27862.1"/>
    <property type="molecule type" value="Genomic_DNA"/>
</dbReference>
<dbReference type="SMR" id="Q3AT13"/>
<dbReference type="STRING" id="340177.Cag_0589"/>
<dbReference type="MEROPS" id="C26.957"/>
<dbReference type="KEGG" id="cch:Cag_0589"/>
<dbReference type="eggNOG" id="COG0519">
    <property type="taxonomic scope" value="Bacteria"/>
</dbReference>
<dbReference type="HOGENOM" id="CLU_014340_0_5_10"/>
<dbReference type="OrthoDB" id="9802219at2"/>
<dbReference type="UniPathway" id="UPA00189">
    <property type="reaction ID" value="UER00296"/>
</dbReference>
<dbReference type="GO" id="GO:0005829">
    <property type="term" value="C:cytosol"/>
    <property type="evidence" value="ECO:0007669"/>
    <property type="project" value="TreeGrafter"/>
</dbReference>
<dbReference type="GO" id="GO:0005524">
    <property type="term" value="F:ATP binding"/>
    <property type="evidence" value="ECO:0007669"/>
    <property type="project" value="UniProtKB-UniRule"/>
</dbReference>
<dbReference type="GO" id="GO:0003921">
    <property type="term" value="F:GMP synthase activity"/>
    <property type="evidence" value="ECO:0007669"/>
    <property type="project" value="InterPro"/>
</dbReference>
<dbReference type="CDD" id="cd01742">
    <property type="entry name" value="GATase1_GMP_Synthase"/>
    <property type="match status" value="1"/>
</dbReference>
<dbReference type="CDD" id="cd01997">
    <property type="entry name" value="GMP_synthase_C"/>
    <property type="match status" value="1"/>
</dbReference>
<dbReference type="FunFam" id="3.30.300.10:FF:000002">
    <property type="entry name" value="GMP synthase [glutamine-hydrolyzing]"/>
    <property type="match status" value="1"/>
</dbReference>
<dbReference type="FunFam" id="3.40.50.620:FF:000001">
    <property type="entry name" value="GMP synthase [glutamine-hydrolyzing]"/>
    <property type="match status" value="1"/>
</dbReference>
<dbReference type="FunFam" id="3.40.50.880:FF:000001">
    <property type="entry name" value="GMP synthase [glutamine-hydrolyzing]"/>
    <property type="match status" value="1"/>
</dbReference>
<dbReference type="Gene3D" id="3.30.300.10">
    <property type="match status" value="1"/>
</dbReference>
<dbReference type="Gene3D" id="3.40.50.880">
    <property type="match status" value="1"/>
</dbReference>
<dbReference type="Gene3D" id="3.40.50.620">
    <property type="entry name" value="HUPs"/>
    <property type="match status" value="1"/>
</dbReference>
<dbReference type="HAMAP" id="MF_00344">
    <property type="entry name" value="GMP_synthase"/>
    <property type="match status" value="1"/>
</dbReference>
<dbReference type="InterPro" id="IPR029062">
    <property type="entry name" value="Class_I_gatase-like"/>
</dbReference>
<dbReference type="InterPro" id="IPR017926">
    <property type="entry name" value="GATASE"/>
</dbReference>
<dbReference type="InterPro" id="IPR001674">
    <property type="entry name" value="GMP_synth_C"/>
</dbReference>
<dbReference type="InterPro" id="IPR004739">
    <property type="entry name" value="GMP_synth_GATase"/>
</dbReference>
<dbReference type="InterPro" id="IPR022955">
    <property type="entry name" value="GMP_synthase"/>
</dbReference>
<dbReference type="InterPro" id="IPR025777">
    <property type="entry name" value="GMPS_ATP_PPase_dom"/>
</dbReference>
<dbReference type="InterPro" id="IPR022310">
    <property type="entry name" value="NAD/GMP_synthase"/>
</dbReference>
<dbReference type="InterPro" id="IPR014729">
    <property type="entry name" value="Rossmann-like_a/b/a_fold"/>
</dbReference>
<dbReference type="NCBIfam" id="TIGR00884">
    <property type="entry name" value="guaA_Cterm"/>
    <property type="match status" value="1"/>
</dbReference>
<dbReference type="NCBIfam" id="TIGR00888">
    <property type="entry name" value="guaA_Nterm"/>
    <property type="match status" value="1"/>
</dbReference>
<dbReference type="NCBIfam" id="NF000848">
    <property type="entry name" value="PRK00074.1"/>
    <property type="match status" value="1"/>
</dbReference>
<dbReference type="PANTHER" id="PTHR11922:SF2">
    <property type="entry name" value="GMP SYNTHASE [GLUTAMINE-HYDROLYZING]"/>
    <property type="match status" value="1"/>
</dbReference>
<dbReference type="PANTHER" id="PTHR11922">
    <property type="entry name" value="GMP SYNTHASE-RELATED"/>
    <property type="match status" value="1"/>
</dbReference>
<dbReference type="Pfam" id="PF00117">
    <property type="entry name" value="GATase"/>
    <property type="match status" value="1"/>
</dbReference>
<dbReference type="Pfam" id="PF00958">
    <property type="entry name" value="GMP_synt_C"/>
    <property type="match status" value="1"/>
</dbReference>
<dbReference type="Pfam" id="PF02540">
    <property type="entry name" value="NAD_synthase"/>
    <property type="match status" value="1"/>
</dbReference>
<dbReference type="PRINTS" id="PR00097">
    <property type="entry name" value="ANTSNTHASEII"/>
</dbReference>
<dbReference type="PRINTS" id="PR00096">
    <property type="entry name" value="GATASE"/>
</dbReference>
<dbReference type="SUPFAM" id="SSF52402">
    <property type="entry name" value="Adenine nucleotide alpha hydrolases-like"/>
    <property type="match status" value="1"/>
</dbReference>
<dbReference type="SUPFAM" id="SSF52317">
    <property type="entry name" value="Class I glutamine amidotransferase-like"/>
    <property type="match status" value="1"/>
</dbReference>
<dbReference type="SUPFAM" id="SSF54810">
    <property type="entry name" value="GMP synthetase C-terminal dimerisation domain"/>
    <property type="match status" value="1"/>
</dbReference>
<dbReference type="PROSITE" id="PS51273">
    <property type="entry name" value="GATASE_TYPE_1"/>
    <property type="match status" value="1"/>
</dbReference>
<dbReference type="PROSITE" id="PS51553">
    <property type="entry name" value="GMPS_ATP_PPASE"/>
    <property type="match status" value="1"/>
</dbReference>
<feature type="chain" id="PRO_0000229417" description="GMP synthase [glutamine-hydrolyzing]">
    <location>
        <begin position="1"/>
        <end position="511"/>
    </location>
</feature>
<feature type="domain" description="Glutamine amidotransferase type-1" evidence="1">
    <location>
        <begin position="3"/>
        <end position="198"/>
    </location>
</feature>
<feature type="domain" description="GMPS ATP-PPase" evidence="1">
    <location>
        <begin position="199"/>
        <end position="386"/>
    </location>
</feature>
<feature type="active site" description="Nucleophile" evidence="1">
    <location>
        <position position="80"/>
    </location>
</feature>
<feature type="active site" evidence="1">
    <location>
        <position position="172"/>
    </location>
</feature>
<feature type="active site" evidence="1">
    <location>
        <position position="174"/>
    </location>
</feature>
<feature type="binding site" evidence="1">
    <location>
        <begin position="226"/>
        <end position="232"/>
    </location>
    <ligand>
        <name>ATP</name>
        <dbReference type="ChEBI" id="CHEBI:30616"/>
    </ligand>
</feature>
<proteinExistence type="inferred from homology"/>
<reference key="1">
    <citation type="submission" date="2005-08" db="EMBL/GenBank/DDBJ databases">
        <title>Complete sequence of Chlorobium chlorochromatii CaD3.</title>
        <authorList>
            <consortium name="US DOE Joint Genome Institute"/>
            <person name="Copeland A."/>
            <person name="Lucas S."/>
            <person name="Lapidus A."/>
            <person name="Barry K."/>
            <person name="Detter J.C."/>
            <person name="Glavina T."/>
            <person name="Hammon N."/>
            <person name="Israni S."/>
            <person name="Pitluck S."/>
            <person name="Bryant D."/>
            <person name="Schmutz J."/>
            <person name="Larimer F."/>
            <person name="Land M."/>
            <person name="Kyrpides N."/>
            <person name="Ivanova N."/>
            <person name="Richardson P."/>
        </authorList>
    </citation>
    <scope>NUCLEOTIDE SEQUENCE [LARGE SCALE GENOMIC DNA]</scope>
    <source>
        <strain>CaD3</strain>
    </source>
</reference>
<name>GUAA_CHLCH</name>